<name>CMR3_SACS2</name>
<evidence type="ECO:0000250" key="1"/>
<evidence type="ECO:0000269" key="2">
    <source>
    </source>
</evidence>
<evidence type="ECO:0000305" key="3"/>
<dbReference type="EMBL" id="AE006641">
    <property type="protein sequence ID" value="AAK42182.1"/>
    <property type="molecule type" value="Genomic_DNA"/>
</dbReference>
<dbReference type="PIR" id="G90365">
    <property type="entry name" value="G90365"/>
</dbReference>
<dbReference type="SMR" id="Q97WW9"/>
<dbReference type="STRING" id="273057.SSO1992"/>
<dbReference type="PaxDb" id="273057-SSO1992"/>
<dbReference type="EnsemblBacteria" id="AAK42182">
    <property type="protein sequence ID" value="AAK42182"/>
    <property type="gene ID" value="SSO1992"/>
</dbReference>
<dbReference type="KEGG" id="sso:SSO1992"/>
<dbReference type="PATRIC" id="fig|273057.12.peg.2068"/>
<dbReference type="eggNOG" id="arCOG02665">
    <property type="taxonomic scope" value="Archaea"/>
</dbReference>
<dbReference type="HOGENOM" id="CLU_884601_0_0_2"/>
<dbReference type="InParanoid" id="Q97WW9"/>
<dbReference type="PhylomeDB" id="Q97WW9"/>
<dbReference type="Proteomes" id="UP000001974">
    <property type="component" value="Chromosome"/>
</dbReference>
<dbReference type="GO" id="GO:0005737">
    <property type="term" value="C:cytoplasm"/>
    <property type="evidence" value="ECO:0007669"/>
    <property type="project" value="UniProtKB-SubCell"/>
</dbReference>
<dbReference type="GO" id="GO:0051607">
    <property type="term" value="P:defense response to virus"/>
    <property type="evidence" value="ECO:0007669"/>
    <property type="project" value="UniProtKB-KW"/>
</dbReference>
<dbReference type="CDD" id="cd09656">
    <property type="entry name" value="Cmr3_III-B"/>
    <property type="match status" value="1"/>
</dbReference>
<dbReference type="Gene3D" id="3.30.70.2940">
    <property type="match status" value="1"/>
</dbReference>
<dbReference type="InterPro" id="IPR019117">
    <property type="entry name" value="CRISPR-assoc_protein_Cmr3"/>
</dbReference>
<dbReference type="InterPro" id="IPR010165">
    <property type="entry name" value="CRISPR-Cmr3_IIIB"/>
</dbReference>
<dbReference type="InterPro" id="IPR052875">
    <property type="entry name" value="CRISPR_assoc_ribonuclease"/>
</dbReference>
<dbReference type="NCBIfam" id="TIGR01888">
    <property type="entry name" value="cas_cmr3"/>
    <property type="match status" value="1"/>
</dbReference>
<dbReference type="PANTHER" id="PTHR37169:SF2">
    <property type="entry name" value="CRISPR SYSTEM CMR SUBUNIT CMR3"/>
    <property type="match status" value="1"/>
</dbReference>
<dbReference type="PANTHER" id="PTHR37169">
    <property type="entry name" value="CRISPR SYSTEM ENDORIBONUCLEASE CSX1-RELATED"/>
    <property type="match status" value="1"/>
</dbReference>
<dbReference type="Pfam" id="PF09700">
    <property type="entry name" value="Cas_Cmr3"/>
    <property type="match status" value="2"/>
</dbReference>
<accession>Q97WW9</accession>
<proteinExistence type="evidence at protein level"/>
<comment type="function">
    <text evidence="1 2">CRISPR (clustered regularly interspaced short palindromic repeat) is an adaptive immune system that provides protection against mobile genetic elements (viruses, transposable elements and conjugative plasmids). CRISPR clusters contain spacers, sequences complementary to antecedent mobile elements, and target invading nucleic acids. CRISPR clusters are transcribed and processed into CRISPR RNA (crRNA) (By similarity). The CMR complex degrades RNA complementary to the crRNA (target RNA) within UA dinucleotides, generating 3'-OH and 5'-phosphate ends. Activity is dependent on the 8 nt long 5' tag in the crRNA, an unpaired 3' flag on the target RNA, and is stimulated by ATP. Some cleavage of the guide crRNA can also be observed.</text>
</comment>
<comment type="subunit">
    <text evidence="2">Part of the CMR ribonucleoprotein complex, consisting of crRNA plus Cmr1/Cmr2/Cmr3/Cmr4/Cmr5/Cmr6 at 1:1 and possibly 3 Cmr7 dimers. A Cmr2/Cmr3/Cmr7 subcomplex without crRNA can also be isolated. It does not cleave target RNA.</text>
</comment>
<comment type="subcellular location">
    <subcellularLocation>
        <location evidence="2">Cytoplasm</location>
    </subcellularLocation>
</comment>
<comment type="similarity">
    <text evidence="3">Belongs to the CRISPR system Cmr3 family.</text>
</comment>
<gene>
    <name type="primary">cmr3</name>
    <name type="ordered locus">SSO1992</name>
</gene>
<protein>
    <recommendedName>
        <fullName>CRISPR system CMR subunit Cmr3</fullName>
    </recommendedName>
    <alternativeName>
        <fullName>CRISPR type III-B/RAMP module-associated protein Cmr3</fullName>
    </alternativeName>
</protein>
<reference key="1">
    <citation type="journal article" date="2001" name="Proc. Natl. Acad. Sci. U.S.A.">
        <title>The complete genome of the crenarchaeon Sulfolobus solfataricus P2.</title>
        <authorList>
            <person name="She Q."/>
            <person name="Singh R.K."/>
            <person name="Confalonieri F."/>
            <person name="Zivanovic Y."/>
            <person name="Allard G."/>
            <person name="Awayez M.J."/>
            <person name="Chan-Weiher C.C.-Y."/>
            <person name="Clausen I.G."/>
            <person name="Curtis B.A."/>
            <person name="De Moors A."/>
            <person name="Erauso G."/>
            <person name="Fletcher C."/>
            <person name="Gordon P.M.K."/>
            <person name="Heikamp-de Jong I."/>
            <person name="Jeffries A.C."/>
            <person name="Kozera C.J."/>
            <person name="Medina N."/>
            <person name="Peng X."/>
            <person name="Thi-Ngoc H.P."/>
            <person name="Redder P."/>
            <person name="Schenk M.E."/>
            <person name="Theriault C."/>
            <person name="Tolstrup N."/>
            <person name="Charlebois R.L."/>
            <person name="Doolittle W.F."/>
            <person name="Duguet M."/>
            <person name="Gaasterland T."/>
            <person name="Garrett R.A."/>
            <person name="Ragan M.A."/>
            <person name="Sensen C.W."/>
            <person name="Van der Oost J."/>
        </authorList>
    </citation>
    <scope>NUCLEOTIDE SEQUENCE [LARGE SCALE GENOMIC DNA]</scope>
    <source>
        <strain>ATCC 35092 / DSM 1617 / JCM 11322 / P2</strain>
    </source>
</reference>
<reference key="2">
    <citation type="journal article" date="2012" name="Mol. Cell">
        <title>Structure and mechanism of the CMR complex for CRISPR-mediated antiviral immunity.</title>
        <authorList>
            <person name="Zhang J."/>
            <person name="Rouillon C."/>
            <person name="Kerou M."/>
            <person name="Reeks J."/>
            <person name="Brugger K."/>
            <person name="Graham S."/>
            <person name="Reimann J."/>
            <person name="Cannone G."/>
            <person name="Liu H."/>
            <person name="Albers S.V."/>
            <person name="Naismith J.H."/>
            <person name="Spagnolo L."/>
            <person name="White M.F."/>
        </authorList>
    </citation>
    <scope>IDENTIFICATION BY MASS SPECTROMETRY</scope>
    <scope>FUNCTION IN CMR COMPLEX</scope>
    <scope>SUBUNIT</scope>
    <scope>SUBCELLULAR LOCATION</scope>
    <source>
        <strain>ATCC 35092 / DSM 1617 / JCM 11322 / P2</strain>
    </source>
</reference>
<organism>
    <name type="scientific">Saccharolobus solfataricus (strain ATCC 35092 / DSM 1617 / JCM 11322 / P2)</name>
    <name type="common">Sulfolobus solfataricus</name>
    <dbReference type="NCBI Taxonomy" id="273057"/>
    <lineage>
        <taxon>Archaea</taxon>
        <taxon>Thermoproteota</taxon>
        <taxon>Thermoprotei</taxon>
        <taxon>Sulfolobales</taxon>
        <taxon>Sulfolobaceae</taxon>
        <taxon>Saccharolobus</taxon>
    </lineage>
</organism>
<sequence>MMKRVLIKPLEPLMFRSQGEFEPLITGSHTAAQSLIIPRPSTIAGMLGYILFNKSSGTGDWLSDLTNLLDTIYGTFIETNGEYLFPLRMGNHLALVDQQHLINLPILLEKEYEQREKGIYELFYDKNKLFQIINHQDRIGISIDKSTRTVKEHYLYSARYLAFKKEVNYVIFIDNDAISDKINGKIVNFGGENRIAKLEVDDYKVDTSIEEEYYLTLSPILIPDEALDDLLDNISDYVTMGKVDKISLGFDIANTKRKEMLTAILEGSIVKRSIIDFIKKEINNNLLDRFTKYEKIGYNTLMNLCKLAFRKILS</sequence>
<keyword id="KW-0051">Antiviral defense</keyword>
<keyword id="KW-0963">Cytoplasm</keyword>
<keyword id="KW-1185">Reference proteome</keyword>
<feature type="chain" id="PRO_0000418076" description="CRISPR system CMR subunit Cmr3">
    <location>
        <begin position="1"/>
        <end position="314"/>
    </location>
</feature>